<gene>
    <name evidence="1" type="primary">zapB</name>
    <name type="ordered locus">KPN78578_39700</name>
    <name type="ORF">KPN_04009</name>
</gene>
<organism>
    <name type="scientific">Klebsiella pneumoniae subsp. pneumoniae (strain ATCC 700721 / MGH 78578)</name>
    <dbReference type="NCBI Taxonomy" id="272620"/>
    <lineage>
        <taxon>Bacteria</taxon>
        <taxon>Pseudomonadati</taxon>
        <taxon>Pseudomonadota</taxon>
        <taxon>Gammaproteobacteria</taxon>
        <taxon>Enterobacterales</taxon>
        <taxon>Enterobacteriaceae</taxon>
        <taxon>Klebsiella/Raoultella group</taxon>
        <taxon>Klebsiella</taxon>
        <taxon>Klebsiella pneumoniae complex</taxon>
    </lineage>
</organism>
<name>ZAPB_KLEP7</name>
<reference key="1">
    <citation type="submission" date="2006-09" db="EMBL/GenBank/DDBJ databases">
        <authorList>
            <consortium name="The Klebsiella pneumonia Genome Sequencing Project"/>
            <person name="McClelland M."/>
            <person name="Sanderson E.K."/>
            <person name="Spieth J."/>
            <person name="Clifton W.S."/>
            <person name="Latreille P."/>
            <person name="Sabo A."/>
            <person name="Pepin K."/>
            <person name="Bhonagiri V."/>
            <person name="Porwollik S."/>
            <person name="Ali J."/>
            <person name="Wilson R.K."/>
        </authorList>
    </citation>
    <scope>NUCLEOTIDE SEQUENCE [LARGE SCALE GENOMIC DNA]</scope>
    <source>
        <strain>ATCC 700721 / MGH 78578</strain>
    </source>
</reference>
<dbReference type="EMBL" id="CP000647">
    <property type="protein sequence ID" value="ABR79394.1"/>
    <property type="molecule type" value="Genomic_DNA"/>
</dbReference>
<dbReference type="SMR" id="A6TFR0"/>
<dbReference type="STRING" id="272620.KPN_04009"/>
<dbReference type="PaxDb" id="272620-KPN_04009"/>
<dbReference type="EnsemblBacteria" id="ABR79394">
    <property type="protein sequence ID" value="ABR79394"/>
    <property type="gene ID" value="KPN_04009"/>
</dbReference>
<dbReference type="KEGG" id="kpn:KPN_04009"/>
<dbReference type="HOGENOM" id="CLU_171174_2_0_6"/>
<dbReference type="Proteomes" id="UP000000265">
    <property type="component" value="Chromosome"/>
</dbReference>
<dbReference type="GO" id="GO:0005737">
    <property type="term" value="C:cytoplasm"/>
    <property type="evidence" value="ECO:0007669"/>
    <property type="project" value="UniProtKB-SubCell"/>
</dbReference>
<dbReference type="GO" id="GO:0016020">
    <property type="term" value="C:membrane"/>
    <property type="evidence" value="ECO:0007669"/>
    <property type="project" value="InterPro"/>
</dbReference>
<dbReference type="GO" id="GO:0000917">
    <property type="term" value="P:division septum assembly"/>
    <property type="evidence" value="ECO:0007669"/>
    <property type="project" value="UniProtKB-KW"/>
</dbReference>
<dbReference type="GO" id="GO:0043093">
    <property type="term" value="P:FtsZ-dependent cytokinesis"/>
    <property type="evidence" value="ECO:0007669"/>
    <property type="project" value="UniProtKB-UniRule"/>
</dbReference>
<dbReference type="GO" id="GO:0016192">
    <property type="term" value="P:vesicle-mediated transport"/>
    <property type="evidence" value="ECO:0007669"/>
    <property type="project" value="InterPro"/>
</dbReference>
<dbReference type="Gene3D" id="1.20.5.340">
    <property type="match status" value="1"/>
</dbReference>
<dbReference type="HAMAP" id="MF_01196">
    <property type="entry name" value="ZapB"/>
    <property type="match status" value="1"/>
</dbReference>
<dbReference type="InterPro" id="IPR009252">
    <property type="entry name" value="Cell_div_ZapB"/>
</dbReference>
<dbReference type="InterPro" id="IPR010989">
    <property type="entry name" value="SNARE"/>
</dbReference>
<dbReference type="NCBIfam" id="NF011951">
    <property type="entry name" value="PRK15422.1"/>
    <property type="match status" value="1"/>
</dbReference>
<dbReference type="Pfam" id="PF06005">
    <property type="entry name" value="ZapB"/>
    <property type="match status" value="1"/>
</dbReference>
<dbReference type="SUPFAM" id="SSF47661">
    <property type="entry name" value="t-snare proteins"/>
    <property type="match status" value="1"/>
</dbReference>
<evidence type="ECO:0000255" key="1">
    <source>
        <dbReference type="HAMAP-Rule" id="MF_01196"/>
    </source>
</evidence>
<evidence type="ECO:0000256" key="2">
    <source>
        <dbReference type="SAM" id="MobiDB-lite"/>
    </source>
</evidence>
<keyword id="KW-0131">Cell cycle</keyword>
<keyword id="KW-0132">Cell division</keyword>
<keyword id="KW-0175">Coiled coil</keyword>
<keyword id="KW-0963">Cytoplasm</keyword>
<keyword id="KW-0717">Septation</keyword>
<accession>A6TFR0</accession>
<protein>
    <recommendedName>
        <fullName evidence="1">Cell division protein ZapB</fullName>
    </recommendedName>
</protein>
<sequence length="81" mass="9557">MTMSLEVFEKLESKVQQAIDTITLLQMEIEELKEKNNTLVQEVQSAQHGREELERENSQLKEQQQGWQERLQALLGRMEEV</sequence>
<proteinExistence type="inferred from homology"/>
<feature type="chain" id="PRO_0000333908" description="Cell division protein ZapB">
    <location>
        <begin position="1"/>
        <end position="81"/>
    </location>
</feature>
<feature type="region of interest" description="Disordered" evidence="2">
    <location>
        <begin position="43"/>
        <end position="64"/>
    </location>
</feature>
<feature type="coiled-coil region" evidence="1">
    <location>
        <begin position="5"/>
        <end position="81"/>
    </location>
</feature>
<feature type="compositionally biased region" description="Basic and acidic residues" evidence="2">
    <location>
        <begin position="48"/>
        <end position="59"/>
    </location>
</feature>
<comment type="function">
    <text evidence="1">Non-essential, abundant cell division factor that is required for proper Z-ring formation. It is recruited early to the divisome by direct interaction with FtsZ, stimulating Z-ring assembly and thereby promoting cell division earlier in the cell cycle. Its recruitment to the Z-ring requires functional FtsA or ZipA.</text>
</comment>
<comment type="subunit">
    <text evidence="1">Homodimer. The ends of the coiled-coil dimer bind to each other, forming polymers. Interacts with FtsZ.</text>
</comment>
<comment type="subcellular location">
    <subcellularLocation>
        <location>Cytoplasm</location>
    </subcellularLocation>
    <text evidence="1">Localizes to the septum at mid-cell, in a FtsZ-like pattern.</text>
</comment>
<comment type="similarity">
    <text evidence="1">Belongs to the ZapB family.</text>
</comment>